<dbReference type="EMBL" id="M20747">
    <property type="protein sequence ID" value="AAA59189.1"/>
    <property type="molecule type" value="mRNA"/>
</dbReference>
<dbReference type="EMBL" id="M91463">
    <property type="protein sequence ID" value="AAA52569.1"/>
    <property type="molecule type" value="Genomic_DNA"/>
</dbReference>
<dbReference type="EMBL" id="AC003688">
    <property type="status" value="NOT_ANNOTATED_CDS"/>
    <property type="molecule type" value="Genomic_DNA"/>
</dbReference>
<dbReference type="EMBL" id="BC034387">
    <property type="protein sequence ID" value="AAH34387.1"/>
    <property type="molecule type" value="mRNA"/>
</dbReference>
<dbReference type="EMBL" id="BC069615">
    <property type="protein sequence ID" value="AAH69615.1"/>
    <property type="molecule type" value="mRNA"/>
</dbReference>
<dbReference type="EMBL" id="BC069621">
    <property type="protein sequence ID" value="AAH69621.1"/>
    <property type="molecule type" value="mRNA"/>
</dbReference>
<dbReference type="EMBL" id="BC113592">
    <property type="protein sequence ID" value="AAI13593.1"/>
    <property type="molecule type" value="mRNA"/>
</dbReference>
<dbReference type="EMBL" id="BC126164">
    <property type="protein sequence ID" value="AAI26165.1"/>
    <property type="molecule type" value="mRNA"/>
</dbReference>
<dbReference type="EMBL" id="X58489">
    <property type="protein sequence ID" value="CAA41399.1"/>
    <property type="molecule type" value="Genomic_DNA"/>
</dbReference>
<dbReference type="CCDS" id="CCDS11097.1">
    <molecule id="P14672-1"/>
</dbReference>
<dbReference type="PIR" id="A49158">
    <property type="entry name" value="A33801"/>
</dbReference>
<dbReference type="RefSeq" id="NP_001033.1">
    <molecule id="P14672-1"/>
    <property type="nucleotide sequence ID" value="NM_001042.3"/>
</dbReference>
<dbReference type="PDB" id="7WSM">
    <property type="method" value="EM"/>
    <property type="resolution" value="3.25 A"/>
    <property type="chains" value="A=1-509"/>
</dbReference>
<dbReference type="PDB" id="7WSN">
    <property type="method" value="EM"/>
    <property type="resolution" value="3.31 A"/>
    <property type="chains" value="A=1-509"/>
</dbReference>
<dbReference type="PDBsum" id="7WSM"/>
<dbReference type="PDBsum" id="7WSN"/>
<dbReference type="EMDB" id="EMD-32760"/>
<dbReference type="EMDB" id="EMD-32761"/>
<dbReference type="SMR" id="P14672"/>
<dbReference type="BioGRID" id="112408">
    <property type="interactions" value="60"/>
</dbReference>
<dbReference type="CORUM" id="P14672"/>
<dbReference type="FunCoup" id="P14672">
    <property type="interactions" value="894"/>
</dbReference>
<dbReference type="IntAct" id="P14672">
    <property type="interactions" value="20"/>
</dbReference>
<dbReference type="MINT" id="P14672"/>
<dbReference type="STRING" id="9606.ENSP00000320935"/>
<dbReference type="BindingDB" id="P14672"/>
<dbReference type="ChEMBL" id="CHEMBL5874"/>
<dbReference type="DrugBank" id="DB00126">
    <property type="generic name" value="Ascorbic acid"/>
</dbReference>
<dbReference type="DrugBank" id="DB01914">
    <property type="generic name" value="D-glucose"/>
</dbReference>
<dbReference type="DrugBank" id="DB09341">
    <property type="generic name" value="Dextrose, unspecified form"/>
</dbReference>
<dbReference type="DrugBank" id="DB09502">
    <property type="generic name" value="Fludeoxyglucose (18F)"/>
</dbReference>
<dbReference type="DrugBank" id="DB01296">
    <property type="generic name" value="Glucosamine"/>
</dbReference>
<dbReference type="TCDB" id="2.A.1.1.80">
    <property type="family name" value="the major facilitator superfamily (mfs)"/>
</dbReference>
<dbReference type="GlyCosmos" id="P14672">
    <property type="glycosylation" value="1 site, No reported glycans"/>
</dbReference>
<dbReference type="GlyGen" id="P14672">
    <property type="glycosylation" value="4 sites"/>
</dbReference>
<dbReference type="iPTMnet" id="P14672"/>
<dbReference type="PhosphoSitePlus" id="P14672"/>
<dbReference type="SwissPalm" id="P14672"/>
<dbReference type="BioMuta" id="SLC2A4"/>
<dbReference type="DMDM" id="121761"/>
<dbReference type="jPOST" id="P14672"/>
<dbReference type="MassIVE" id="P14672"/>
<dbReference type="PaxDb" id="9606-ENSP00000320935"/>
<dbReference type="PeptideAtlas" id="P14672"/>
<dbReference type="ProteomicsDB" id="53073">
    <molecule id="P14672-1"/>
</dbReference>
<dbReference type="ProteomicsDB" id="58372"/>
<dbReference type="Antibodypedia" id="4297">
    <property type="antibodies" value="803 antibodies from 45 providers"/>
</dbReference>
<dbReference type="DNASU" id="6517"/>
<dbReference type="Ensembl" id="ENST00000317370.13">
    <molecule id="P14672-1"/>
    <property type="protein sequence ID" value="ENSP00000320935.8"/>
    <property type="gene ID" value="ENSG00000181856.15"/>
</dbReference>
<dbReference type="Ensembl" id="ENST00000572485.5">
    <molecule id="P14672-2"/>
    <property type="protein sequence ID" value="ENSP00000461086.1"/>
    <property type="gene ID" value="ENSG00000181856.15"/>
</dbReference>
<dbReference type="Ensembl" id="ENST00000672821.1">
    <molecule id="P14672-2"/>
    <property type="protein sequence ID" value="ENSP00000500577.1"/>
    <property type="gene ID" value="ENSG00000288174.1"/>
</dbReference>
<dbReference type="Ensembl" id="ENST00000673224.1">
    <molecule id="P14672-1"/>
    <property type="protein sequence ID" value="ENSP00000499804.1"/>
    <property type="gene ID" value="ENSG00000288174.1"/>
</dbReference>
<dbReference type="GeneID" id="6517"/>
<dbReference type="KEGG" id="hsa:6517"/>
<dbReference type="MANE-Select" id="ENST00000317370.13">
    <property type="protein sequence ID" value="ENSP00000320935.8"/>
    <property type="RefSeq nucleotide sequence ID" value="NM_001042.3"/>
    <property type="RefSeq protein sequence ID" value="NP_001033.1"/>
</dbReference>
<dbReference type="UCSC" id="uc002gfp.4">
    <molecule id="P14672-1"/>
    <property type="organism name" value="human"/>
</dbReference>
<dbReference type="AGR" id="HGNC:11009"/>
<dbReference type="CTD" id="6517"/>
<dbReference type="DisGeNET" id="6517"/>
<dbReference type="GeneCards" id="SLC2A4"/>
<dbReference type="HGNC" id="HGNC:11009">
    <property type="gene designation" value="SLC2A4"/>
</dbReference>
<dbReference type="HPA" id="ENSG00000181856">
    <property type="expression patterns" value="Tissue enhanced (heart muscle, skeletal muscle)"/>
</dbReference>
<dbReference type="MalaCards" id="SLC2A4"/>
<dbReference type="MIM" id="125853">
    <property type="type" value="phenotype"/>
</dbReference>
<dbReference type="MIM" id="138190">
    <property type="type" value="gene"/>
</dbReference>
<dbReference type="neXtProt" id="NX_P14672"/>
<dbReference type="OpenTargets" id="ENSG00000181856"/>
<dbReference type="PharmGKB" id="PA35879"/>
<dbReference type="VEuPathDB" id="HostDB:ENSG00000181856"/>
<dbReference type="eggNOG" id="KOG0569">
    <property type="taxonomic scope" value="Eukaryota"/>
</dbReference>
<dbReference type="GeneTree" id="ENSGT00940000160688"/>
<dbReference type="HOGENOM" id="CLU_001265_30_5_1"/>
<dbReference type="InParanoid" id="P14672"/>
<dbReference type="OMA" id="VAQFLCM"/>
<dbReference type="OrthoDB" id="4540492at2759"/>
<dbReference type="PAN-GO" id="P14672">
    <property type="GO annotations" value="7 GO annotations based on evolutionary models"/>
</dbReference>
<dbReference type="PhylomeDB" id="P14672"/>
<dbReference type="TreeFam" id="TF313762"/>
<dbReference type="PathwayCommons" id="P14672"/>
<dbReference type="Reactome" id="R-HSA-1445148">
    <property type="pathway name" value="Translocation of SLC2A4 (GLUT4) to the plasma membrane"/>
</dbReference>
<dbReference type="Reactome" id="R-HSA-189200">
    <property type="pathway name" value="Cellular hexose transport"/>
</dbReference>
<dbReference type="Reactome" id="R-HSA-381340">
    <property type="pathway name" value="Transcriptional regulation of white adipocyte differentiation"/>
</dbReference>
<dbReference type="SignaLink" id="P14672"/>
<dbReference type="SIGNOR" id="P14672"/>
<dbReference type="BioGRID-ORCS" id="6517">
    <property type="hits" value="11 hits in 1154 CRISPR screens"/>
</dbReference>
<dbReference type="GeneWiki" id="GLUT4"/>
<dbReference type="GenomeRNAi" id="6517"/>
<dbReference type="Pharos" id="P14672">
    <property type="development level" value="Tchem"/>
</dbReference>
<dbReference type="PRO" id="PR:P14672"/>
<dbReference type="Proteomes" id="UP000005640">
    <property type="component" value="Chromosome 17"/>
</dbReference>
<dbReference type="RNAct" id="P14672">
    <property type="molecule type" value="protein"/>
</dbReference>
<dbReference type="Bgee" id="ENSG00000181856">
    <property type="expression patterns" value="Expressed in gastrocnemius and 94 other cell types or tissues"/>
</dbReference>
<dbReference type="ExpressionAtlas" id="P14672">
    <property type="expression patterns" value="baseline and differential"/>
</dbReference>
<dbReference type="GO" id="GO:0005905">
    <property type="term" value="C:clathrin-coated pit"/>
    <property type="evidence" value="ECO:0007669"/>
    <property type="project" value="Ensembl"/>
</dbReference>
<dbReference type="GO" id="GO:0030136">
    <property type="term" value="C:clathrin-coated vesicle"/>
    <property type="evidence" value="ECO:0000314"/>
    <property type="project" value="UniProtKB"/>
</dbReference>
<dbReference type="GO" id="GO:0030659">
    <property type="term" value="C:cytoplasmic vesicle membrane"/>
    <property type="evidence" value="ECO:0000250"/>
    <property type="project" value="UniProtKB"/>
</dbReference>
<dbReference type="GO" id="GO:0005829">
    <property type="term" value="C:cytosol"/>
    <property type="evidence" value="ECO:0007669"/>
    <property type="project" value="Ensembl"/>
</dbReference>
<dbReference type="GO" id="GO:0012505">
    <property type="term" value="C:endomembrane system"/>
    <property type="evidence" value="ECO:0000250"/>
    <property type="project" value="UniProtKB"/>
</dbReference>
<dbReference type="GO" id="GO:0009897">
    <property type="term" value="C:external side of plasma membrane"/>
    <property type="evidence" value="ECO:0000314"/>
    <property type="project" value="MGI"/>
</dbReference>
<dbReference type="GO" id="GO:0070062">
    <property type="term" value="C:extracellular exosome"/>
    <property type="evidence" value="ECO:0007669"/>
    <property type="project" value="Ensembl"/>
</dbReference>
<dbReference type="GO" id="GO:0032593">
    <property type="term" value="C:insulin-responsive compartment"/>
    <property type="evidence" value="ECO:0000314"/>
    <property type="project" value="UniProtKB"/>
</dbReference>
<dbReference type="GO" id="GO:0016020">
    <property type="term" value="C:membrane"/>
    <property type="evidence" value="ECO:0000304"/>
    <property type="project" value="ProtInc"/>
</dbReference>
<dbReference type="GO" id="GO:0045121">
    <property type="term" value="C:membrane raft"/>
    <property type="evidence" value="ECO:0007669"/>
    <property type="project" value="Ensembl"/>
</dbReference>
<dbReference type="GO" id="GO:0005771">
    <property type="term" value="C:multivesicular body"/>
    <property type="evidence" value="ECO:0007669"/>
    <property type="project" value="Ensembl"/>
</dbReference>
<dbReference type="GO" id="GO:0048471">
    <property type="term" value="C:perinuclear region of cytoplasm"/>
    <property type="evidence" value="ECO:0000314"/>
    <property type="project" value="UniProtKB"/>
</dbReference>
<dbReference type="GO" id="GO:0005886">
    <property type="term" value="C:plasma membrane"/>
    <property type="evidence" value="ECO:0000314"/>
    <property type="project" value="UniProtKB"/>
</dbReference>
<dbReference type="GO" id="GO:0098793">
    <property type="term" value="C:presynapse"/>
    <property type="evidence" value="ECO:0007669"/>
    <property type="project" value="Ensembl"/>
</dbReference>
<dbReference type="GO" id="GO:0042383">
    <property type="term" value="C:sarcolemma"/>
    <property type="evidence" value="ECO:0000250"/>
    <property type="project" value="ARUK-UCL"/>
</dbReference>
<dbReference type="GO" id="GO:0016529">
    <property type="term" value="C:sarcoplasmic reticulum"/>
    <property type="evidence" value="ECO:0007669"/>
    <property type="project" value="Ensembl"/>
</dbReference>
<dbReference type="GO" id="GO:0030315">
    <property type="term" value="C:T-tubule"/>
    <property type="evidence" value="ECO:0007669"/>
    <property type="project" value="Ensembl"/>
</dbReference>
<dbReference type="GO" id="GO:0005802">
    <property type="term" value="C:trans-Golgi network"/>
    <property type="evidence" value="ECO:0000314"/>
    <property type="project" value="ARUK-UCL"/>
</dbReference>
<dbReference type="GO" id="GO:0030140">
    <property type="term" value="C:trans-Golgi network transport vesicle"/>
    <property type="evidence" value="ECO:0007669"/>
    <property type="project" value="Ensembl"/>
</dbReference>
<dbReference type="GO" id="GO:0012506">
    <property type="term" value="C:vesicle membrane"/>
    <property type="evidence" value="ECO:0000314"/>
    <property type="project" value="MGI"/>
</dbReference>
<dbReference type="GO" id="GO:0055056">
    <property type="term" value="F:D-glucose transmembrane transporter activity"/>
    <property type="evidence" value="ECO:0000314"/>
    <property type="project" value="UniProt"/>
</dbReference>
<dbReference type="GO" id="GO:0015304">
    <property type="term" value="F:D-glucose uniporter activity"/>
    <property type="evidence" value="ECO:0000250"/>
    <property type="project" value="UniProtKB"/>
</dbReference>
<dbReference type="GO" id="GO:0010021">
    <property type="term" value="P:amylopectin biosynthetic process"/>
    <property type="evidence" value="ECO:0007669"/>
    <property type="project" value="Ensembl"/>
</dbReference>
<dbReference type="GO" id="GO:0050873">
    <property type="term" value="P:brown fat cell differentiation"/>
    <property type="evidence" value="ECO:0007669"/>
    <property type="project" value="Ensembl"/>
</dbReference>
<dbReference type="GO" id="GO:0005975">
    <property type="term" value="P:carbohydrate metabolic process"/>
    <property type="evidence" value="ECO:0000304"/>
    <property type="project" value="ProtInc"/>
</dbReference>
<dbReference type="GO" id="GO:0071456">
    <property type="term" value="P:cellular response to hypoxia"/>
    <property type="evidence" value="ECO:0007669"/>
    <property type="project" value="Ensembl"/>
</dbReference>
<dbReference type="GO" id="GO:0032869">
    <property type="term" value="P:cellular response to insulin stimulus"/>
    <property type="evidence" value="ECO:0000314"/>
    <property type="project" value="UniProtKB"/>
</dbReference>
<dbReference type="GO" id="GO:0071470">
    <property type="term" value="P:cellular response to osmotic stress"/>
    <property type="evidence" value="ECO:0007669"/>
    <property type="project" value="Ensembl"/>
</dbReference>
<dbReference type="GO" id="GO:0071356">
    <property type="term" value="P:cellular response to tumor necrosis factor"/>
    <property type="evidence" value="ECO:0007669"/>
    <property type="project" value="Ensembl"/>
</dbReference>
<dbReference type="GO" id="GO:0046323">
    <property type="term" value="P:D-glucose import"/>
    <property type="evidence" value="ECO:0000318"/>
    <property type="project" value="GO_Central"/>
</dbReference>
<dbReference type="GO" id="GO:1904659">
    <property type="term" value="P:D-glucose transmembrane transport"/>
    <property type="evidence" value="ECO:0000250"/>
    <property type="project" value="UniProtKB"/>
</dbReference>
<dbReference type="GO" id="GO:0070837">
    <property type="term" value="P:dehydroascorbic acid transport"/>
    <property type="evidence" value="ECO:0000318"/>
    <property type="project" value="GO_Central"/>
</dbReference>
<dbReference type="GO" id="GO:0042593">
    <property type="term" value="P:glucose homeostasis"/>
    <property type="evidence" value="ECO:0000314"/>
    <property type="project" value="MGI"/>
</dbReference>
<dbReference type="GO" id="GO:0044381">
    <property type="term" value="P:glucose import in response to insulin stimulus"/>
    <property type="evidence" value="ECO:0000250"/>
    <property type="project" value="UniProtKB"/>
</dbReference>
<dbReference type="GO" id="GO:0007611">
    <property type="term" value="P:learning or memory"/>
    <property type="evidence" value="ECO:0000250"/>
    <property type="project" value="ARUK-UCL"/>
</dbReference>
<dbReference type="GO" id="GO:0007616">
    <property type="term" value="P:long-term memory"/>
    <property type="evidence" value="ECO:0000250"/>
    <property type="project" value="ARUK-UCL"/>
</dbReference>
<dbReference type="GO" id="GO:0031550">
    <property type="term" value="P:positive regulation of brain-derived neurotrophic factor receptor signaling pathway"/>
    <property type="evidence" value="ECO:0000250"/>
    <property type="project" value="ARUK-UCL"/>
</dbReference>
<dbReference type="GO" id="GO:0098694">
    <property type="term" value="P:regulation of synaptic vesicle budding from presynaptic endocytic zone membrane"/>
    <property type="evidence" value="ECO:0007669"/>
    <property type="project" value="Ensembl"/>
</dbReference>
<dbReference type="GO" id="GO:0045471">
    <property type="term" value="P:response to ethanol"/>
    <property type="evidence" value="ECO:0007669"/>
    <property type="project" value="Ensembl"/>
</dbReference>
<dbReference type="GO" id="GO:0007614">
    <property type="term" value="P:short-term memory"/>
    <property type="evidence" value="ECO:0000250"/>
    <property type="project" value="ARUK-UCL"/>
</dbReference>
<dbReference type="GO" id="GO:0150104">
    <property type="term" value="P:transport across blood-brain barrier"/>
    <property type="evidence" value="ECO:0000303"/>
    <property type="project" value="ARUK-UCL"/>
</dbReference>
<dbReference type="GO" id="GO:0070343">
    <property type="term" value="P:white fat cell proliferation"/>
    <property type="evidence" value="ECO:0000250"/>
    <property type="project" value="UniProt"/>
</dbReference>
<dbReference type="CDD" id="cd17431">
    <property type="entry name" value="MFS_GLUT_Class1"/>
    <property type="match status" value="1"/>
</dbReference>
<dbReference type="FunFam" id="1.20.1250.20:FF:000029">
    <property type="entry name" value="solute carrier family 2, facilitated glucose transporter member 4"/>
    <property type="match status" value="1"/>
</dbReference>
<dbReference type="Gene3D" id="1.20.1250.20">
    <property type="entry name" value="MFS general substrate transporter like domains"/>
    <property type="match status" value="1"/>
</dbReference>
<dbReference type="InterPro" id="IPR002441">
    <property type="entry name" value="Glc_transpt_4"/>
</dbReference>
<dbReference type="InterPro" id="IPR045263">
    <property type="entry name" value="GLUT"/>
</dbReference>
<dbReference type="InterPro" id="IPR020846">
    <property type="entry name" value="MFS_dom"/>
</dbReference>
<dbReference type="InterPro" id="IPR005828">
    <property type="entry name" value="MFS_sugar_transport-like"/>
</dbReference>
<dbReference type="InterPro" id="IPR036259">
    <property type="entry name" value="MFS_trans_sf"/>
</dbReference>
<dbReference type="InterPro" id="IPR003663">
    <property type="entry name" value="Sugar/inositol_transpt"/>
</dbReference>
<dbReference type="InterPro" id="IPR005829">
    <property type="entry name" value="Sugar_transporter_CS"/>
</dbReference>
<dbReference type="NCBIfam" id="TIGR00879">
    <property type="entry name" value="SP"/>
    <property type="match status" value="1"/>
</dbReference>
<dbReference type="PANTHER" id="PTHR23503">
    <property type="entry name" value="SOLUTE CARRIER FAMILY 2"/>
    <property type="match status" value="1"/>
</dbReference>
<dbReference type="PANTHER" id="PTHR23503:SF120">
    <property type="entry name" value="SOLUTE CARRIER FAMILY 2, FACILITATED GLUCOSE TRANSPORTER MEMBER 4"/>
    <property type="match status" value="1"/>
</dbReference>
<dbReference type="Pfam" id="PF00083">
    <property type="entry name" value="Sugar_tr"/>
    <property type="match status" value="1"/>
</dbReference>
<dbReference type="PRINTS" id="PR01193">
    <property type="entry name" value="GLUCTRSPORT4"/>
</dbReference>
<dbReference type="PRINTS" id="PR00171">
    <property type="entry name" value="SUGRTRNSPORT"/>
</dbReference>
<dbReference type="SUPFAM" id="SSF103473">
    <property type="entry name" value="MFS general substrate transporter"/>
    <property type="match status" value="1"/>
</dbReference>
<dbReference type="PROSITE" id="PS50850">
    <property type="entry name" value="MFS"/>
    <property type="match status" value="1"/>
</dbReference>
<dbReference type="PROSITE" id="PS00216">
    <property type="entry name" value="SUGAR_TRANSPORT_1"/>
    <property type="match status" value="1"/>
</dbReference>
<dbReference type="PROSITE" id="PS00217">
    <property type="entry name" value="SUGAR_TRANSPORT_2"/>
    <property type="match status" value="1"/>
</dbReference>
<organism>
    <name type="scientific">Homo sapiens</name>
    <name type="common">Human</name>
    <dbReference type="NCBI Taxonomy" id="9606"/>
    <lineage>
        <taxon>Eukaryota</taxon>
        <taxon>Metazoa</taxon>
        <taxon>Chordata</taxon>
        <taxon>Craniata</taxon>
        <taxon>Vertebrata</taxon>
        <taxon>Euteleostomi</taxon>
        <taxon>Mammalia</taxon>
        <taxon>Eutheria</taxon>
        <taxon>Euarchontoglires</taxon>
        <taxon>Primates</taxon>
        <taxon>Haplorrhini</taxon>
        <taxon>Catarrhini</taxon>
        <taxon>Hominidae</taxon>
        <taxon>Homo</taxon>
    </lineage>
</organism>
<sequence length="509" mass="54787">MPSGFQQIGSEDGEPPQQRVTGTLVLAVFSAVLGSLQFGYNIGVINAPQKVIEQSYNETWLGRQGPEGPSSIPPGTLTTLWALSVAIFSVGGMISSFLIGIISQWLGRKRAMLVNNVLAVLGGSLMGLANAAASYEMLILGRFLIGAYSGLTSGLVPMYVGEIAPTHLRGALGTLNQLAIVIGILIAQVLGLESLLGTASLWPLLLGLTVLPALLQLVLLPFCPESPRYLYIIQNLEGPARKSLKRLTGWADVSGVLAELKDEKRKLERERPLSLLQLLGSRTHRQPLIIAVVLQLSQQLSGINAVFYYSTSIFETAGVGQPAYATIGAGVVNTVFTLVSVLLVERAGRRTLHLLGLAGMCGCAILMTVALLLLERVPAMSYVSIVAIFGFVAFFEIGPGPIPWFIVAELFSQGPRPAAMAVAGFSNWTSNFIIGMGFQYVAEAMGPYVFLLFAVLLLGFFIFTFLRVPETRGRTFDQISAAFHRTPSLLEQEVKPSTELEYLGPDEND</sequence>
<keyword id="KW-0002">3D-structure</keyword>
<keyword id="KW-0025">Alternative splicing</keyword>
<keyword id="KW-1003">Cell membrane</keyword>
<keyword id="KW-0963">Cytoplasm</keyword>
<keyword id="KW-0219">Diabetes mellitus</keyword>
<keyword id="KW-0225">Disease variant</keyword>
<keyword id="KW-0325">Glycoprotein</keyword>
<keyword id="KW-0449">Lipoprotein</keyword>
<keyword id="KW-0472">Membrane</keyword>
<keyword id="KW-0564">Palmitate</keyword>
<keyword id="KW-0597">Phosphoprotein</keyword>
<keyword id="KW-1267">Proteomics identification</keyword>
<keyword id="KW-1185">Reference proteome</keyword>
<keyword id="KW-0762">Sugar transport</keyword>
<keyword id="KW-0812">Transmembrane</keyword>
<keyword id="KW-1133">Transmembrane helix</keyword>
<keyword id="KW-0813">Transport</keyword>
<keyword id="KW-0832">Ubl conjugation</keyword>
<name>GLUT4_HUMAN</name>
<accession>P14672</accession>
<accession>Q05BQ3</accession>
<accession>Q14CX2</accession>
<reference key="1">
    <citation type="journal article" date="1989" name="J. Biol. Chem.">
        <title>Cloning and characterization of the major insulin-responsive glucose transporter expressed in human skeletal muscle and other insulin-responsive tissues.</title>
        <authorList>
            <person name="Fukumoto H."/>
            <person name="Kayano T."/>
            <person name="Buse J.B."/>
            <person name="Edwards Y."/>
            <person name="Pilch P.F."/>
            <person name="Bell G.I."/>
            <person name="Seino S."/>
        </authorList>
    </citation>
    <scope>NUCLEOTIDE SEQUENCE [MRNA] (ISOFORM 1)</scope>
</reference>
<reference key="2">
    <citation type="journal article" date="1992" name="Diabetes">
        <title>Human GLUT4/muscle-fat glucose-transporter gene. Characterization and genetic variation.</title>
        <authorList>
            <person name="Buse J.B."/>
            <person name="Yasuda K."/>
            <person name="Lay T.P."/>
            <person name="Seo T.S."/>
            <person name="Olson A.L."/>
            <person name="Pessin J.E."/>
            <person name="Karam J.H."/>
            <person name="Seino S."/>
            <person name="Bell G.I."/>
        </authorList>
    </citation>
    <scope>NUCLEOTIDE SEQUENCE [GENOMIC DNA]</scope>
    <scope>VARIANT THR-385</scope>
</reference>
<reference key="3">
    <citation type="journal article" date="2006" name="Nature">
        <title>DNA sequence of human chromosome 17 and analysis of rearrangement in the human lineage.</title>
        <authorList>
            <person name="Zody M.C."/>
            <person name="Garber M."/>
            <person name="Adams D.J."/>
            <person name="Sharpe T."/>
            <person name="Harrow J."/>
            <person name="Lupski J.R."/>
            <person name="Nicholson C."/>
            <person name="Searle S.M."/>
            <person name="Wilming L."/>
            <person name="Young S.K."/>
            <person name="Abouelleil A."/>
            <person name="Allen N.R."/>
            <person name="Bi W."/>
            <person name="Bloom T."/>
            <person name="Borowsky M.L."/>
            <person name="Bugalter B.E."/>
            <person name="Butler J."/>
            <person name="Chang J.L."/>
            <person name="Chen C.-K."/>
            <person name="Cook A."/>
            <person name="Corum B."/>
            <person name="Cuomo C.A."/>
            <person name="de Jong P.J."/>
            <person name="DeCaprio D."/>
            <person name="Dewar K."/>
            <person name="FitzGerald M."/>
            <person name="Gilbert J."/>
            <person name="Gibson R."/>
            <person name="Gnerre S."/>
            <person name="Goldstein S."/>
            <person name="Grafham D.V."/>
            <person name="Grocock R."/>
            <person name="Hafez N."/>
            <person name="Hagopian D.S."/>
            <person name="Hart E."/>
            <person name="Norman C.H."/>
            <person name="Humphray S."/>
            <person name="Jaffe D.B."/>
            <person name="Jones M."/>
            <person name="Kamal M."/>
            <person name="Khodiyar V.K."/>
            <person name="LaButti K."/>
            <person name="Laird G."/>
            <person name="Lehoczky J."/>
            <person name="Liu X."/>
            <person name="Lokyitsang T."/>
            <person name="Loveland J."/>
            <person name="Lui A."/>
            <person name="Macdonald P."/>
            <person name="Major J.E."/>
            <person name="Matthews L."/>
            <person name="Mauceli E."/>
            <person name="McCarroll S.A."/>
            <person name="Mihalev A.H."/>
            <person name="Mudge J."/>
            <person name="Nguyen C."/>
            <person name="Nicol R."/>
            <person name="O'Leary S.B."/>
            <person name="Osoegawa K."/>
            <person name="Schwartz D.C."/>
            <person name="Shaw-Smith C."/>
            <person name="Stankiewicz P."/>
            <person name="Steward C."/>
            <person name="Swarbreck D."/>
            <person name="Venkataraman V."/>
            <person name="Whittaker C.A."/>
            <person name="Yang X."/>
            <person name="Zimmer A.R."/>
            <person name="Bradley A."/>
            <person name="Hubbard T."/>
            <person name="Birren B.W."/>
            <person name="Rogers J."/>
            <person name="Lander E.S."/>
            <person name="Nusbaum C."/>
        </authorList>
    </citation>
    <scope>NUCLEOTIDE SEQUENCE [LARGE SCALE GENOMIC DNA]</scope>
</reference>
<reference key="4">
    <citation type="journal article" date="2004" name="Genome Res.">
        <title>The status, quality, and expansion of the NIH full-length cDNA project: the Mammalian Gene Collection (MGC).</title>
        <authorList>
            <consortium name="The MGC Project Team"/>
        </authorList>
    </citation>
    <scope>NUCLEOTIDE SEQUENCE [LARGE SCALE MRNA] (ISOFORMS 1 AND 2)</scope>
    <source>
        <tissue>Colon</tissue>
    </source>
</reference>
<reference key="5">
    <citation type="journal article" date="1993" name="Gene">
        <title>Identification of the 5' end of the gene encoding a human insulin-responsive glucose transporter.</title>
        <authorList>
            <person name="Chiaramonte R."/>
            <person name="Martini R."/>
            <person name="Taramelli R."/>
            <person name="Comi P."/>
        </authorList>
    </citation>
    <scope>NUCLEOTIDE SEQUENCE [GENOMIC DNA] OF 1-11</scope>
</reference>
<reference key="6">
    <citation type="journal article" date="1994" name="J. Biol. Chem.">
        <title>A Leu-Leu sequence is essential for COOH-terminal targeting signal of GLUT4 glucose transporter in fibroblasts.</title>
        <authorList>
            <person name="Verhey K.J."/>
            <person name="Birnbaum M.J."/>
        </authorList>
    </citation>
    <scope>SUBCELLULAR LOCATION</scope>
    <scope>MUTAGENESIS OF 489-LEU-LEU-490</scope>
</reference>
<reference key="7">
    <citation type="journal article" date="2002" name="J. Biol. Chem.">
        <title>The insulin-sensitive glucose transporter, GLUT4, interacts physically with Daxx. Two proteins with capacity to bind Ubc9 and conjugated to SUMO1.</title>
        <authorList>
            <person name="Lalioti V.S."/>
            <person name="Vergarajauregui S."/>
            <person name="Pulido D."/>
            <person name="Sandoval I.V."/>
        </authorList>
    </citation>
    <scope>INTERACTION WITH DAXX</scope>
    <scope>SUMOYLATION</scope>
</reference>
<reference key="8">
    <citation type="journal article" date="2006" name="Biochem. Biophys. Res. Commun.">
        <title>Identification and characterization of p49/STRAP as a novel GLUT4-binding protein.</title>
        <authorList>
            <person name="Lisinski I."/>
            <person name="Matsumoto H."/>
            <person name="Yver D.R."/>
            <person name="Schuermann A."/>
            <person name="Cushman S.W."/>
            <person name="Al-Hasani H."/>
        </authorList>
    </citation>
    <scope>INTERACTION WITH SRFBP1</scope>
</reference>
<reference key="9">
    <citation type="journal article" date="2007" name="Biochem. Biophys. Res. Commun.">
        <title>Role of SGK1 kinase in regulating glucose transport via glucose transporter GLUT4.</title>
        <authorList>
            <person name="Jeyaraj S."/>
            <person name="Boehmer C."/>
            <person name="Lang F."/>
            <person name="Palmada M."/>
        </authorList>
    </citation>
    <scope>PHOSPHORYLATION AT SER-274 BY SGK1</scope>
</reference>
<reference key="10">
    <citation type="journal article" date="2008" name="Proc. Natl. Acad. Sci. U.S.A.">
        <title>A quantitative atlas of mitotic phosphorylation.</title>
        <authorList>
            <person name="Dephoure N."/>
            <person name="Zhou C."/>
            <person name="Villen J."/>
            <person name="Beausoleil S.A."/>
            <person name="Bakalarski C.E."/>
            <person name="Elledge S.J."/>
            <person name="Gygi S.P."/>
        </authorList>
    </citation>
    <scope>IDENTIFICATION BY MASS SPECTROMETRY [LARGE SCALE ANALYSIS]</scope>
    <source>
        <tissue>Cervix carcinoma</tissue>
    </source>
</reference>
<reference key="11">
    <citation type="journal article" date="2009" name="Nat. Biotechnol.">
        <title>Mass-spectrometric identification and relative quantification of N-linked cell surface glycoproteins.</title>
        <authorList>
            <person name="Wollscheid B."/>
            <person name="Bausch-Fluck D."/>
            <person name="Henderson C."/>
            <person name="O'Brien R."/>
            <person name="Bibel M."/>
            <person name="Schiess R."/>
            <person name="Aebersold R."/>
            <person name="Watts J.D."/>
        </authorList>
    </citation>
    <scope>GLYCOSYLATION [LARGE SCALE ANALYSIS] AT ASN-57</scope>
    <source>
        <tissue>Leukemic T-cell</tissue>
    </source>
</reference>
<reference key="12">
    <citation type="journal article" date="2017" name="J. Biol. Chem.">
        <title>DHHC7 Palmitoylates Glucose Transporter 4 (Glut4) and Regulates Glut4 Membrane Translocation.</title>
        <authorList>
            <person name="Du K."/>
            <person name="Murakami S."/>
            <person name="Sun Y."/>
            <person name="Kilpatrick C.L."/>
            <person name="Luscher B."/>
        </authorList>
    </citation>
    <scope>PALMITOYLATION AT CYS-223</scope>
    <scope>MUTAGENESIS OF CYS-223</scope>
</reference>
<reference key="13">
    <citation type="journal article" date="1991" name="J. Clin. Invest.">
        <title>Analysis of the gene sequences of the insulin receptor and the insulin-sensitive glucose transporter (GLUT-4) in patients with common-type non-insulin-dependent diabetes mellitus.</title>
        <authorList>
            <person name="Kusari J."/>
            <person name="Verma U.S."/>
            <person name="Buse J.B."/>
            <person name="Henry R.R."/>
            <person name="Olefsky J.M."/>
        </authorList>
    </citation>
    <scope>VARIANT T2D ILE-383</scope>
</reference>
<reference key="14">
    <citation type="journal article" date="1991" name="Diabetes">
        <title>Molecular scanning of insulin-responsive glucose transporter (GLUT4) gene in NIDDM subjects.</title>
        <authorList>
            <person name="Choi W.H."/>
            <person name="O'Rahilly S."/>
            <person name="Buse J.B."/>
            <person name="Rees A."/>
            <person name="Morgan R."/>
            <person name="Flier J.S."/>
            <person name="Moller D.E."/>
        </authorList>
    </citation>
    <scope>VARIANT T2D ILE-383</scope>
</reference>
<reference key="15">
    <citation type="journal article" date="1992" name="Diabetologia">
        <title>Insulin receptor and insulin-responsive glucose transporter (GLUT 4) mutations and polymorphisms in a Welsh type 2 (non-insulin-dependent) diabetic population.</title>
        <authorList>
            <person name="O'Rahilly S."/>
            <person name="Krook A."/>
            <person name="Morgan R."/>
            <person name="Rees A."/>
            <person name="Flier J.S."/>
            <person name="Moller D.E."/>
        </authorList>
    </citation>
    <scope>VARIANT T2D ILE-383</scope>
</reference>
<gene>
    <name evidence="19" type="primary">SLC2A4</name>
    <name evidence="15" type="synonym">GLUT4</name>
</gene>
<evidence type="ECO:0000250" key="1">
    <source>
        <dbReference type="UniProtKB" id="P11169"/>
    </source>
</evidence>
<evidence type="ECO:0000250" key="2">
    <source>
        <dbReference type="UniProtKB" id="P14142"/>
    </source>
</evidence>
<evidence type="ECO:0000250" key="3">
    <source>
        <dbReference type="UniProtKB" id="P19357"/>
    </source>
</evidence>
<evidence type="ECO:0000255" key="4"/>
<evidence type="ECO:0000269" key="5">
    <source>
    </source>
</evidence>
<evidence type="ECO:0000269" key="6">
    <source>
    </source>
</evidence>
<evidence type="ECO:0000269" key="7">
    <source>
    </source>
</evidence>
<evidence type="ECO:0000269" key="8">
    <source>
    </source>
</evidence>
<evidence type="ECO:0000269" key="9">
    <source>
    </source>
</evidence>
<evidence type="ECO:0000269" key="10">
    <source>
    </source>
</evidence>
<evidence type="ECO:0000269" key="11">
    <source>
    </source>
</evidence>
<evidence type="ECO:0000269" key="12">
    <source>
    </source>
</evidence>
<evidence type="ECO:0000269" key="13">
    <source>
    </source>
</evidence>
<evidence type="ECO:0000269" key="14">
    <source>
    </source>
</evidence>
<evidence type="ECO:0000303" key="15">
    <source>
    </source>
</evidence>
<evidence type="ECO:0000303" key="16">
    <source>
    </source>
</evidence>
<evidence type="ECO:0000305" key="17"/>
<evidence type="ECO:0000305" key="18">
    <source>
    </source>
</evidence>
<evidence type="ECO:0000312" key="19">
    <source>
        <dbReference type="HGNC" id="HGNC:11009"/>
    </source>
</evidence>
<evidence type="ECO:0007829" key="20">
    <source>
        <dbReference type="PDB" id="7WSM"/>
    </source>
</evidence>
<evidence type="ECO:0007829" key="21">
    <source>
        <dbReference type="PDB" id="7WSN"/>
    </source>
</evidence>
<feature type="chain" id="PRO_0000050363" description="Solute carrier family 2, facilitated glucose transporter member 4">
    <location>
        <begin position="1"/>
        <end position="509"/>
    </location>
</feature>
<feature type="topological domain" description="Cytoplasmic" evidence="4">
    <location>
        <begin position="1"/>
        <end position="24"/>
    </location>
</feature>
<feature type="transmembrane region" description="Helical; Name=1" evidence="4">
    <location>
        <begin position="25"/>
        <end position="45"/>
    </location>
</feature>
<feature type="topological domain" description="Extracellular" evidence="4">
    <location>
        <begin position="46"/>
        <end position="81"/>
    </location>
</feature>
<feature type="transmembrane region" description="Helical; Name=2" evidence="4">
    <location>
        <begin position="82"/>
        <end position="102"/>
    </location>
</feature>
<feature type="topological domain" description="Cytoplasmic" evidence="4">
    <location>
        <begin position="103"/>
        <end position="111"/>
    </location>
</feature>
<feature type="transmembrane region" description="Helical; Name=3" evidence="4">
    <location>
        <begin position="112"/>
        <end position="132"/>
    </location>
</feature>
<feature type="topological domain" description="Extracellular" evidence="4">
    <location>
        <begin position="133"/>
        <end position="142"/>
    </location>
</feature>
<feature type="transmembrane region" description="Helical; Name=4" evidence="4">
    <location>
        <begin position="143"/>
        <end position="163"/>
    </location>
</feature>
<feature type="topological domain" description="Cytoplasmic" evidence="4">
    <location>
        <begin position="164"/>
        <end position="171"/>
    </location>
</feature>
<feature type="transmembrane region" description="Helical; Name=5" evidence="4">
    <location>
        <begin position="172"/>
        <end position="192"/>
    </location>
</feature>
<feature type="topological domain" description="Extracellular" evidence="4">
    <location>
        <begin position="193"/>
        <end position="201"/>
    </location>
</feature>
<feature type="transmembrane region" description="Helical; Name=6" evidence="4">
    <location>
        <begin position="202"/>
        <end position="222"/>
    </location>
</feature>
<feature type="topological domain" description="Cytoplasmic" evidence="4">
    <location>
        <begin position="223"/>
        <end position="287"/>
    </location>
</feature>
<feature type="transmembrane region" description="Helical; Name=7" evidence="4">
    <location>
        <begin position="288"/>
        <end position="308"/>
    </location>
</feature>
<feature type="topological domain" description="Extracellular" evidence="4">
    <location>
        <begin position="309"/>
        <end position="323"/>
    </location>
</feature>
<feature type="transmembrane region" description="Helical; Name=8" evidence="4">
    <location>
        <begin position="324"/>
        <end position="344"/>
    </location>
</feature>
<feature type="topological domain" description="Cytoplasmic" evidence="4">
    <location>
        <begin position="345"/>
        <end position="353"/>
    </location>
</feature>
<feature type="transmembrane region" description="Helical; Name=9" evidence="4">
    <location>
        <begin position="354"/>
        <end position="374"/>
    </location>
</feature>
<feature type="topological domain" description="Extracellular" evidence="4">
    <location>
        <begin position="375"/>
        <end position="384"/>
    </location>
</feature>
<feature type="transmembrane region" description="Helical; Name=10" evidence="4">
    <location>
        <begin position="385"/>
        <end position="405"/>
    </location>
</feature>
<feature type="topological domain" description="Cytoplasmic" evidence="4">
    <location>
        <begin position="406"/>
        <end position="417"/>
    </location>
</feature>
<feature type="transmembrane region" description="Helical; Name=11" evidence="4">
    <location>
        <begin position="418"/>
        <end position="438"/>
    </location>
</feature>
<feature type="topological domain" description="Extracellular" evidence="4">
    <location>
        <begin position="439"/>
        <end position="445"/>
    </location>
</feature>
<feature type="transmembrane region" description="Helical; Name=12" evidence="4">
    <location>
        <begin position="446"/>
        <end position="466"/>
    </location>
</feature>
<feature type="topological domain" description="Cytoplasmic" evidence="4">
    <location>
        <begin position="467"/>
        <end position="509"/>
    </location>
</feature>
<feature type="region of interest" description="Interaction with SRFBP1" evidence="8">
    <location>
        <begin position="7"/>
        <end position="13"/>
    </location>
</feature>
<feature type="short sequence motif" description="Dileucine internalization motif" evidence="14">
    <location>
        <begin position="489"/>
        <end position="490"/>
    </location>
</feature>
<feature type="binding site" evidence="1">
    <location>
        <position position="177"/>
    </location>
    <ligand>
        <name>D-glucose</name>
        <dbReference type="ChEBI" id="CHEBI:4167"/>
    </ligand>
</feature>
<feature type="binding site" evidence="1">
    <location>
        <begin position="298"/>
        <end position="299"/>
    </location>
    <ligand>
        <name>D-glucose</name>
        <dbReference type="ChEBI" id="CHEBI:4167"/>
    </ligand>
</feature>
<feature type="binding site" evidence="1">
    <location>
        <position position="304"/>
    </location>
    <ligand>
        <name>D-glucose</name>
        <dbReference type="ChEBI" id="CHEBI:4167"/>
    </ligand>
</feature>
<feature type="binding site" evidence="1">
    <location>
        <position position="333"/>
    </location>
    <ligand>
        <name>D-glucose</name>
        <dbReference type="ChEBI" id="CHEBI:4167"/>
    </ligand>
</feature>
<feature type="binding site" evidence="1">
    <location>
        <position position="396"/>
    </location>
    <ligand>
        <name>D-glucose</name>
        <dbReference type="ChEBI" id="CHEBI:4167"/>
    </ligand>
</feature>
<feature type="binding site" evidence="1">
    <location>
        <position position="404"/>
    </location>
    <ligand>
        <name>D-glucose</name>
        <dbReference type="ChEBI" id="CHEBI:4167"/>
    </ligand>
</feature>
<feature type="modified residue" description="Phosphoserine" evidence="3">
    <location>
        <position position="10"/>
    </location>
</feature>
<feature type="modified residue" description="Phosphoserine; by SGK1" evidence="9">
    <location>
        <position position="274"/>
    </location>
</feature>
<feature type="modified residue" description="Phosphothreonine" evidence="2">
    <location>
        <position position="486"/>
    </location>
</feature>
<feature type="modified residue" description="Phosphoserine" evidence="2">
    <location>
        <position position="488"/>
    </location>
</feature>
<feature type="lipid moiety-binding region" description="S-palmitoyl cysteine" evidence="18">
    <location>
        <position position="223"/>
    </location>
</feature>
<feature type="glycosylation site" description="N-linked (GlcNAc...) asparagine" evidence="12">
    <location>
        <position position="57"/>
    </location>
</feature>
<feature type="splice variant" id="VSP_056331" description="In isoform 2." evidence="16">
    <original>LLVERAGRRTLHLLGLAGMCGCAILMTVALLLLERVPAMSYVSIVAIFGFVAFFEIGPGPIPWFIVAELFSQGP</original>
    <variation>TAHLWNGPSHWLHLPGCPGGVVGGAGGAPDAPSPGPGGHVWLCHPDDCGSAPAGASSSHELRLHCGHLWLRGIF</variation>
    <location>
        <begin position="342"/>
        <end position="415"/>
    </location>
</feature>
<feature type="splice variant" id="VSP_056332" description="In isoform 2." evidence="16">
    <location>
        <begin position="416"/>
        <end position="509"/>
    </location>
</feature>
<feature type="sequence variant" id="VAR_052503" description="In dbSNP:rs35198331.">
    <original>S</original>
    <variation>R</variation>
    <location>
        <position position="55"/>
    </location>
</feature>
<feature type="sequence variant" id="VAR_012060" description="In dbSNP:rs5434.">
    <original>T</original>
    <variation>S</variation>
    <location>
        <position position="78"/>
    </location>
</feature>
<feature type="sequence variant" id="VAR_020336" description="In dbSNP:rs8192702.">
    <original>A</original>
    <variation>V</variation>
    <location>
        <position position="358"/>
    </location>
</feature>
<feature type="sequence variant" id="VAR_007170" description="In T2D; dbSNP:rs121434581." evidence="7 10 11">
    <original>V</original>
    <variation>I</variation>
    <location>
        <position position="383"/>
    </location>
</feature>
<feature type="sequence variant" id="VAR_007171" description="In dbSNP:rs775242206." evidence="6">
    <original>I</original>
    <variation>T</variation>
    <location>
        <position position="385"/>
    </location>
</feature>
<feature type="mutagenesis site" description="Loss of palmitoylation." evidence="13">
    <original>C</original>
    <variation>S</variation>
    <location>
        <position position="223"/>
    </location>
</feature>
<feature type="mutagenesis site" description="Changes subcellular location mainly to the plasma membrane." evidence="14">
    <original>LL</original>
    <variation>AA</variation>
    <location>
        <begin position="489"/>
        <end position="490"/>
    </location>
</feature>
<feature type="sequence conflict" description="In Ref. 2; AAA52569." evidence="17" ref="2">
    <location>
        <begin position="151"/>
        <end position="154"/>
    </location>
</feature>
<feature type="helix" evidence="20">
    <location>
        <begin position="22"/>
        <end position="43"/>
    </location>
</feature>
<feature type="helix" evidence="20">
    <location>
        <begin position="49"/>
        <end position="64"/>
    </location>
</feature>
<feature type="helix" evidence="20">
    <location>
        <begin position="65"/>
        <end position="67"/>
    </location>
</feature>
<feature type="helix" evidence="20">
    <location>
        <begin position="74"/>
        <end position="98"/>
    </location>
</feature>
<feature type="helix" evidence="20">
    <location>
        <begin position="101"/>
        <end position="106"/>
    </location>
</feature>
<feature type="helix" evidence="20">
    <location>
        <begin position="109"/>
        <end position="127"/>
    </location>
</feature>
<feature type="helix" evidence="20">
    <location>
        <begin position="130"/>
        <end position="132"/>
    </location>
</feature>
<feature type="helix" evidence="20">
    <location>
        <begin position="136"/>
        <end position="163"/>
    </location>
</feature>
<feature type="turn" evidence="21">
    <location>
        <begin position="166"/>
        <end position="168"/>
    </location>
</feature>
<feature type="helix" evidence="20">
    <location>
        <begin position="169"/>
        <end position="173"/>
    </location>
</feature>
<feature type="helix" evidence="20">
    <location>
        <begin position="175"/>
        <end position="189"/>
    </location>
</feature>
<feature type="strand" evidence="20">
    <location>
        <begin position="192"/>
        <end position="196"/>
    </location>
</feature>
<feature type="turn" evidence="20">
    <location>
        <begin position="199"/>
        <end position="201"/>
    </location>
</feature>
<feature type="helix" evidence="20">
    <location>
        <begin position="202"/>
        <end position="208"/>
    </location>
</feature>
<feature type="helix" evidence="20">
    <location>
        <begin position="210"/>
        <end position="219"/>
    </location>
</feature>
<feature type="helix" evidence="20">
    <location>
        <begin position="220"/>
        <end position="222"/>
    </location>
</feature>
<feature type="helix" evidence="20">
    <location>
        <begin position="227"/>
        <end position="232"/>
    </location>
</feature>
<feature type="helix" evidence="20">
    <location>
        <begin position="238"/>
        <end position="248"/>
    </location>
</feature>
<feature type="helix" evidence="20">
    <location>
        <begin position="254"/>
        <end position="269"/>
    </location>
</feature>
<feature type="helix" evidence="20">
    <location>
        <begin position="275"/>
        <end position="279"/>
    </location>
</feature>
<feature type="helix" evidence="20">
    <location>
        <begin position="282"/>
        <end position="284"/>
    </location>
</feature>
<feature type="helix" evidence="20">
    <location>
        <begin position="285"/>
        <end position="299"/>
    </location>
</feature>
<feature type="helix" evidence="20">
    <location>
        <begin position="303"/>
        <end position="316"/>
    </location>
</feature>
<feature type="helix" evidence="20">
    <location>
        <begin position="322"/>
        <end position="343"/>
    </location>
</feature>
<feature type="helix" evidence="20">
    <location>
        <begin position="344"/>
        <end position="346"/>
    </location>
</feature>
<feature type="helix" evidence="20">
    <location>
        <begin position="350"/>
        <end position="372"/>
    </location>
</feature>
<feature type="turn" evidence="20">
    <location>
        <begin position="373"/>
        <end position="376"/>
    </location>
</feature>
<feature type="helix" evidence="20">
    <location>
        <begin position="380"/>
        <end position="397"/>
    </location>
</feature>
<feature type="turn" evidence="20">
    <location>
        <begin position="398"/>
        <end position="401"/>
    </location>
</feature>
<feature type="helix" evidence="20">
    <location>
        <begin position="402"/>
        <end position="410"/>
    </location>
</feature>
<feature type="turn" evidence="20">
    <location>
        <begin position="413"/>
        <end position="415"/>
    </location>
</feature>
<feature type="helix" evidence="20">
    <location>
        <begin position="416"/>
        <end position="445"/>
    </location>
</feature>
<feature type="helix" evidence="20">
    <location>
        <begin position="449"/>
        <end position="467"/>
    </location>
</feature>
<feature type="helix" evidence="20">
    <location>
        <begin position="476"/>
        <end position="482"/>
    </location>
</feature>
<protein>
    <recommendedName>
        <fullName evidence="17">Solute carrier family 2, facilitated glucose transporter member 4</fullName>
    </recommendedName>
    <alternativeName>
        <fullName evidence="15">Glucose transporter type 4, insulin-responsive</fullName>
        <shortName evidence="15">GLUT-4</shortName>
    </alternativeName>
</protein>
<comment type="function">
    <text evidence="3">Insulin-regulated facilitative glucose transporter, which plays a key role in removal of glucose from circulation. Response to insulin is regulated by its intracellular localization: in the absence of insulin, it is efficiently retained intracellularly within storage compartments in muscle and fat cells. Upon insulin stimulation, translocates from these compartments to the cell surface where it transports glucose from the extracellular milieu into the cell.</text>
</comment>
<comment type="catalytic activity">
    <reaction evidence="3">
        <text>D-glucose(out) = D-glucose(in)</text>
        <dbReference type="Rhea" id="RHEA:60376"/>
        <dbReference type="ChEBI" id="CHEBI:4167"/>
    </reaction>
</comment>
<comment type="subunit">
    <text evidence="2 3 5 8">Interacts with NDUFA9 (By similarity). Binds to DAXX (PubMed:11842083). Interacts via its N-terminus with SRFBP1 (PubMed:16647043). Interacts with TRARG1; the interaction is required for proper SLC2A4 recycling after insulin stimulation (By similarity).</text>
</comment>
<comment type="interaction">
    <interactant intactId="EBI-367146">
        <id>P14672</id>
    </interactant>
    <interactant intactId="EBI-947892">
        <id>Q9NP73</id>
        <label>ALG13</label>
    </interactant>
    <organismsDiffer>false</organismsDiffer>
    <experiments>2</experiments>
</comment>
<comment type="interaction">
    <interactant intactId="EBI-367146">
        <id>P14672</id>
    </interactant>
    <interactant intactId="EBI-625022">
        <id>O43889-2</id>
        <label>CREB3</label>
    </interactant>
    <organismsDiffer>false</organismsDiffer>
    <experiments>3</experiments>
</comment>
<comment type="subcellular location">
    <subcellularLocation>
        <location evidence="2">Cell membrane</location>
        <topology evidence="2">Multi-pass membrane protein</topology>
    </subcellularLocation>
    <subcellularLocation>
        <location evidence="14">Endomembrane system</location>
        <topology evidence="14">Multi-pass membrane protein</topology>
    </subcellularLocation>
    <subcellularLocation>
        <location evidence="2">Cytoplasm</location>
        <location evidence="2">Perinuclear region</location>
    </subcellularLocation>
    <text evidence="2 14">Localizes primarily to the perinuclear region, undergoing continued recycling to the plasma membrane where it is rapidly reinternalized (PubMed:8300557). The dileucine internalization motif is critical for intracellular sequestration (PubMed:8300557). Insulin stimulation induces translocation to the cell membrane (By similarity).</text>
</comment>
<comment type="alternative products">
    <event type="alternative splicing"/>
    <isoform>
        <id>P14672-1</id>
        <name>1</name>
        <sequence type="displayed"/>
    </isoform>
    <isoform>
        <id>P14672-2</id>
        <name>2</name>
        <sequence type="described" ref="VSP_056331 VSP_056332"/>
    </isoform>
</comment>
<comment type="tissue specificity">
    <text>Skeletal and cardiac muscles; brown and white fat.</text>
</comment>
<comment type="domain">
    <text evidence="14">The dileucine internalization motif is critical for intracellular sequestration.</text>
</comment>
<comment type="PTM">
    <text evidence="5">Sumoylated.</text>
</comment>
<comment type="PTM">
    <text evidence="13">Palmitoylated (PubMed:28057756). Palmitoylation by ZDHHC7 controls the insulin-dependent translocation of GLUT4 to the plasma membrane (PubMed:28057756).</text>
</comment>
<comment type="disease" evidence="7 10 11">
    <disease id="DI-02060">
        <name>Type 2 diabetes mellitus</name>
        <acronym>T2D</acronym>
        <description>A multifactorial disorder of glucose homeostasis caused by a lack of sensitivity to insulin. Affected individuals usually have an obese body habitus and manifestations of a metabolic syndrome characterized by diabetes, insulin resistance, hypertension and hypertriglyceridemia. The disease results in long-term complications that affect the eyes, kidneys, nerves, and blood vessels.</description>
        <dbReference type="MIM" id="125853"/>
    </disease>
    <text>The disease may be caused by variants affecting the gene represented in this entry.</text>
</comment>
<comment type="miscellaneous">
    <text evidence="2">Insulin-stimulated phosphorylation of TBC1D4 is required for GLUT4 translocation.</text>
</comment>
<comment type="similarity">
    <text evidence="17">Belongs to the major facilitator superfamily. Sugar transporter (TC 2.A.1.1) family. Glucose transporter subfamily.</text>
</comment>
<comment type="online information" name="Wikipedia">
    <link uri="https://en.wikipedia.org/wiki/Glut4"/>
    <text>GLUT4 entry</text>
</comment>
<proteinExistence type="evidence at protein level"/>